<keyword id="KW-1185">Reference proteome</keyword>
<sequence>MAVEVKYVVIREGEEKMSFTSKKEADAYDKMLDTADLLDTWLTNSPVQMEDEQREALSLWLAEQKDVLSTILKTGKLPSPQVVGAESEEEDASHAA</sequence>
<name>YEBG_ECO57</name>
<organism>
    <name type="scientific">Escherichia coli O157:H7</name>
    <dbReference type="NCBI Taxonomy" id="83334"/>
    <lineage>
        <taxon>Bacteria</taxon>
        <taxon>Pseudomonadati</taxon>
        <taxon>Pseudomonadota</taxon>
        <taxon>Gammaproteobacteria</taxon>
        <taxon>Enterobacterales</taxon>
        <taxon>Enterobacteriaceae</taxon>
        <taxon>Escherichia</taxon>
    </lineage>
</organism>
<accession>P0ACZ1</accession>
<accession>P33220</accession>
<dbReference type="EMBL" id="AE005174">
    <property type="protein sequence ID" value="AAG56838.1"/>
    <property type="molecule type" value="Genomic_DNA"/>
</dbReference>
<dbReference type="EMBL" id="BA000007">
    <property type="protein sequence ID" value="BAB35981.1"/>
    <property type="molecule type" value="Genomic_DNA"/>
</dbReference>
<dbReference type="PIR" id="B85797">
    <property type="entry name" value="B85797"/>
</dbReference>
<dbReference type="PIR" id="F90948">
    <property type="entry name" value="F90948"/>
</dbReference>
<dbReference type="RefSeq" id="NP_310585.1">
    <property type="nucleotide sequence ID" value="NC_002695.1"/>
</dbReference>
<dbReference type="RefSeq" id="WP_000257738.1">
    <property type="nucleotide sequence ID" value="NZ_VOAI01000010.1"/>
</dbReference>
<dbReference type="SMR" id="P0ACZ1"/>
<dbReference type="STRING" id="155864.Z2900"/>
<dbReference type="GeneID" id="912752"/>
<dbReference type="GeneID" id="93776115"/>
<dbReference type="KEGG" id="ece:Z2900"/>
<dbReference type="KEGG" id="ecs:ECs_2558"/>
<dbReference type="PATRIC" id="fig|386585.9.peg.2681"/>
<dbReference type="eggNOG" id="COG3141">
    <property type="taxonomic scope" value="Bacteria"/>
</dbReference>
<dbReference type="HOGENOM" id="CLU_146554_1_0_6"/>
<dbReference type="OMA" id="QMDETQA"/>
<dbReference type="Proteomes" id="UP000000558">
    <property type="component" value="Chromosome"/>
</dbReference>
<dbReference type="Proteomes" id="UP000002519">
    <property type="component" value="Chromosome"/>
</dbReference>
<dbReference type="Gene3D" id="1.10.10.710">
    <property type="entry name" value="PSPTO_1197 like"/>
    <property type="match status" value="1"/>
</dbReference>
<dbReference type="InterPro" id="IPR009813">
    <property type="entry name" value="Uncharacterised_YebG"/>
</dbReference>
<dbReference type="InterPro" id="IPR038627">
    <property type="entry name" value="YebG-like_sf"/>
</dbReference>
<dbReference type="NCBIfam" id="NF007475">
    <property type="entry name" value="PRK10061.1"/>
    <property type="match status" value="1"/>
</dbReference>
<dbReference type="Pfam" id="PF07130">
    <property type="entry name" value="YebG"/>
    <property type="match status" value="1"/>
</dbReference>
<gene>
    <name type="primary">yebG</name>
    <name type="ordered locus">Z2900</name>
    <name type="ordered locus">ECs2558</name>
</gene>
<feature type="chain" id="PRO_0000169044" description="Uncharacterized protein YebG">
    <location>
        <begin position="1"/>
        <end position="96"/>
    </location>
</feature>
<protein>
    <recommendedName>
        <fullName>Uncharacterized protein YebG</fullName>
    </recommendedName>
</protein>
<proteinExistence type="predicted"/>
<reference key="1">
    <citation type="journal article" date="2001" name="Nature">
        <title>Genome sequence of enterohaemorrhagic Escherichia coli O157:H7.</title>
        <authorList>
            <person name="Perna N.T."/>
            <person name="Plunkett G. III"/>
            <person name="Burland V."/>
            <person name="Mau B."/>
            <person name="Glasner J.D."/>
            <person name="Rose D.J."/>
            <person name="Mayhew G.F."/>
            <person name="Evans P.S."/>
            <person name="Gregor J."/>
            <person name="Kirkpatrick H.A."/>
            <person name="Posfai G."/>
            <person name="Hackett J."/>
            <person name="Klink S."/>
            <person name="Boutin A."/>
            <person name="Shao Y."/>
            <person name="Miller L."/>
            <person name="Grotbeck E.J."/>
            <person name="Davis N.W."/>
            <person name="Lim A."/>
            <person name="Dimalanta E.T."/>
            <person name="Potamousis K."/>
            <person name="Apodaca J."/>
            <person name="Anantharaman T.S."/>
            <person name="Lin J."/>
            <person name="Yen G."/>
            <person name="Schwartz D.C."/>
            <person name="Welch R.A."/>
            <person name="Blattner F.R."/>
        </authorList>
    </citation>
    <scope>NUCLEOTIDE SEQUENCE [LARGE SCALE GENOMIC DNA]</scope>
    <source>
        <strain>O157:H7 / EDL933 / ATCC 700927 / EHEC</strain>
    </source>
</reference>
<reference key="2">
    <citation type="journal article" date="2001" name="DNA Res.">
        <title>Complete genome sequence of enterohemorrhagic Escherichia coli O157:H7 and genomic comparison with a laboratory strain K-12.</title>
        <authorList>
            <person name="Hayashi T."/>
            <person name="Makino K."/>
            <person name="Ohnishi M."/>
            <person name="Kurokawa K."/>
            <person name="Ishii K."/>
            <person name="Yokoyama K."/>
            <person name="Han C.-G."/>
            <person name="Ohtsubo E."/>
            <person name="Nakayama K."/>
            <person name="Murata T."/>
            <person name="Tanaka M."/>
            <person name="Tobe T."/>
            <person name="Iida T."/>
            <person name="Takami H."/>
            <person name="Honda T."/>
            <person name="Sasakawa C."/>
            <person name="Ogasawara N."/>
            <person name="Yasunaga T."/>
            <person name="Kuhara S."/>
            <person name="Shiba T."/>
            <person name="Hattori M."/>
            <person name="Shinagawa H."/>
        </authorList>
    </citation>
    <scope>NUCLEOTIDE SEQUENCE [LARGE SCALE GENOMIC DNA]</scope>
    <source>
        <strain>O157:H7 / Sakai / RIMD 0509952 / EHEC</strain>
    </source>
</reference>